<evidence type="ECO:0000255" key="1">
    <source>
        <dbReference type="HAMAP-Rule" id="MF_01369"/>
    </source>
</evidence>
<evidence type="ECO:0000305" key="2"/>
<name>RL23_THEYD</name>
<feature type="chain" id="PRO_1000144618" description="Large ribosomal subunit protein uL23">
    <location>
        <begin position="1"/>
        <end position="95"/>
    </location>
</feature>
<comment type="function">
    <text evidence="1">One of the early assembly proteins it binds 23S rRNA. One of the proteins that surrounds the polypeptide exit tunnel on the outside of the ribosome. Forms the main docking site for trigger factor binding to the ribosome.</text>
</comment>
<comment type="subunit">
    <text evidence="1">Part of the 50S ribosomal subunit. Contacts protein L29, and trigger factor when it is bound to the ribosome.</text>
</comment>
<comment type="similarity">
    <text evidence="1">Belongs to the universal ribosomal protein uL23 family.</text>
</comment>
<dbReference type="EMBL" id="CP001147">
    <property type="protein sequence ID" value="ACI21537.1"/>
    <property type="molecule type" value="Genomic_DNA"/>
</dbReference>
<dbReference type="RefSeq" id="WP_012546250.1">
    <property type="nucleotide sequence ID" value="NC_011296.1"/>
</dbReference>
<dbReference type="RefSeq" id="YP_002249243.1">
    <property type="nucleotide sequence ID" value="NC_011296.1"/>
</dbReference>
<dbReference type="SMR" id="B5YG45"/>
<dbReference type="FunCoup" id="B5YG45">
    <property type="interactions" value="453"/>
</dbReference>
<dbReference type="STRING" id="289376.THEYE_A1444"/>
<dbReference type="EnsemblBacteria" id="ACI21537">
    <property type="protein sequence ID" value="ACI21537"/>
    <property type="gene ID" value="THEYE_A1444"/>
</dbReference>
<dbReference type="KEGG" id="tye:THEYE_A1444"/>
<dbReference type="PATRIC" id="fig|289376.4.peg.1405"/>
<dbReference type="eggNOG" id="COG0089">
    <property type="taxonomic scope" value="Bacteria"/>
</dbReference>
<dbReference type="HOGENOM" id="CLU_037562_3_2_0"/>
<dbReference type="InParanoid" id="B5YG45"/>
<dbReference type="OrthoDB" id="9797862at2"/>
<dbReference type="Proteomes" id="UP000000718">
    <property type="component" value="Chromosome"/>
</dbReference>
<dbReference type="GO" id="GO:0022625">
    <property type="term" value="C:cytosolic large ribosomal subunit"/>
    <property type="evidence" value="ECO:0000318"/>
    <property type="project" value="GO_Central"/>
</dbReference>
<dbReference type="GO" id="GO:0019843">
    <property type="term" value="F:rRNA binding"/>
    <property type="evidence" value="ECO:0007669"/>
    <property type="project" value="UniProtKB-UniRule"/>
</dbReference>
<dbReference type="GO" id="GO:0003735">
    <property type="term" value="F:structural constituent of ribosome"/>
    <property type="evidence" value="ECO:0000318"/>
    <property type="project" value="GO_Central"/>
</dbReference>
<dbReference type="GO" id="GO:0006412">
    <property type="term" value="P:translation"/>
    <property type="evidence" value="ECO:0007669"/>
    <property type="project" value="UniProtKB-UniRule"/>
</dbReference>
<dbReference type="FunFam" id="3.30.70.330:FF:000001">
    <property type="entry name" value="50S ribosomal protein L23"/>
    <property type="match status" value="1"/>
</dbReference>
<dbReference type="Gene3D" id="3.30.70.330">
    <property type="match status" value="1"/>
</dbReference>
<dbReference type="HAMAP" id="MF_01369_B">
    <property type="entry name" value="Ribosomal_uL23_B"/>
    <property type="match status" value="1"/>
</dbReference>
<dbReference type="InterPro" id="IPR012677">
    <property type="entry name" value="Nucleotide-bd_a/b_plait_sf"/>
</dbReference>
<dbReference type="InterPro" id="IPR013025">
    <property type="entry name" value="Ribosomal_uL23-like"/>
</dbReference>
<dbReference type="InterPro" id="IPR012678">
    <property type="entry name" value="Ribosomal_uL23/eL15/eS24_sf"/>
</dbReference>
<dbReference type="InterPro" id="IPR001014">
    <property type="entry name" value="Ribosomal_uL23_CS"/>
</dbReference>
<dbReference type="NCBIfam" id="NF004363">
    <property type="entry name" value="PRK05738.2-4"/>
    <property type="match status" value="1"/>
</dbReference>
<dbReference type="PANTHER" id="PTHR11620">
    <property type="entry name" value="60S RIBOSOMAL PROTEIN L23A"/>
    <property type="match status" value="1"/>
</dbReference>
<dbReference type="Pfam" id="PF00276">
    <property type="entry name" value="Ribosomal_L23"/>
    <property type="match status" value="1"/>
</dbReference>
<dbReference type="SUPFAM" id="SSF54189">
    <property type="entry name" value="Ribosomal proteins S24e, L23 and L15e"/>
    <property type="match status" value="1"/>
</dbReference>
<dbReference type="PROSITE" id="PS00050">
    <property type="entry name" value="RIBOSOMAL_L23"/>
    <property type="match status" value="1"/>
</dbReference>
<protein>
    <recommendedName>
        <fullName evidence="1">Large ribosomal subunit protein uL23</fullName>
    </recommendedName>
    <alternativeName>
        <fullName evidence="2">50S ribosomal protein L23</fullName>
    </alternativeName>
</protein>
<sequence>MDIYSIIKKPVFTEKALNLKESQNKVVIEVHPDVNKVQVKKAFEEIFKVKVDSVSIINVKPKIKRVGLHFTKTKKTKKAIVTLKAGEKLDLIEGV</sequence>
<proteinExistence type="inferred from homology"/>
<organism>
    <name type="scientific">Thermodesulfovibrio yellowstonii (strain ATCC 51303 / DSM 11347 / YP87)</name>
    <dbReference type="NCBI Taxonomy" id="289376"/>
    <lineage>
        <taxon>Bacteria</taxon>
        <taxon>Pseudomonadati</taxon>
        <taxon>Nitrospirota</taxon>
        <taxon>Thermodesulfovibrionia</taxon>
        <taxon>Thermodesulfovibrionales</taxon>
        <taxon>Thermodesulfovibrionaceae</taxon>
        <taxon>Thermodesulfovibrio</taxon>
    </lineage>
</organism>
<keyword id="KW-1185">Reference proteome</keyword>
<keyword id="KW-0687">Ribonucleoprotein</keyword>
<keyword id="KW-0689">Ribosomal protein</keyword>
<keyword id="KW-0694">RNA-binding</keyword>
<keyword id="KW-0699">rRNA-binding</keyword>
<gene>
    <name evidence="1" type="primary">rplW</name>
    <name type="ordered locus">THEYE_A1444</name>
</gene>
<reference key="1">
    <citation type="submission" date="2008-08" db="EMBL/GenBank/DDBJ databases">
        <title>The complete genome sequence of Thermodesulfovibrio yellowstonii strain ATCC 51303 / DSM 11347 / YP87.</title>
        <authorList>
            <person name="Dodson R.J."/>
            <person name="Durkin A.S."/>
            <person name="Wu M."/>
            <person name="Eisen J."/>
            <person name="Sutton G."/>
        </authorList>
    </citation>
    <scope>NUCLEOTIDE SEQUENCE [LARGE SCALE GENOMIC DNA]</scope>
    <source>
        <strain>ATCC 51303 / DSM 11347 / YP87</strain>
    </source>
</reference>
<accession>B5YG45</accession>